<gene>
    <name evidence="1" type="primary">hslV</name>
    <name type="ordered locus">NGR_c34050</name>
</gene>
<organism>
    <name type="scientific">Sinorhizobium fredii (strain NBRC 101917 / NGR234)</name>
    <dbReference type="NCBI Taxonomy" id="394"/>
    <lineage>
        <taxon>Bacteria</taxon>
        <taxon>Pseudomonadati</taxon>
        <taxon>Pseudomonadota</taxon>
        <taxon>Alphaproteobacteria</taxon>
        <taxon>Hyphomicrobiales</taxon>
        <taxon>Rhizobiaceae</taxon>
        <taxon>Sinorhizobium/Ensifer group</taxon>
        <taxon>Sinorhizobium</taxon>
    </lineage>
</organism>
<feature type="chain" id="PRO_1000125414" description="ATP-dependent protease subunit HslV">
    <location>
        <begin position="1"/>
        <end position="185"/>
    </location>
</feature>
<feature type="active site" evidence="1">
    <location>
        <position position="13"/>
    </location>
</feature>
<feature type="binding site" evidence="1">
    <location>
        <position position="167"/>
    </location>
    <ligand>
        <name>Na(+)</name>
        <dbReference type="ChEBI" id="CHEBI:29101"/>
    </ligand>
</feature>
<feature type="binding site" evidence="1">
    <location>
        <position position="170"/>
    </location>
    <ligand>
        <name>Na(+)</name>
        <dbReference type="ChEBI" id="CHEBI:29101"/>
    </ligand>
</feature>
<feature type="binding site" evidence="1">
    <location>
        <position position="173"/>
    </location>
    <ligand>
        <name>Na(+)</name>
        <dbReference type="ChEBI" id="CHEBI:29101"/>
    </ligand>
</feature>
<name>HSLV_SINFN</name>
<comment type="function">
    <text evidence="1">Protease subunit of a proteasome-like degradation complex believed to be a general protein degrading machinery.</text>
</comment>
<comment type="catalytic activity">
    <reaction evidence="1">
        <text>ATP-dependent cleavage of peptide bonds with broad specificity.</text>
        <dbReference type="EC" id="3.4.25.2"/>
    </reaction>
</comment>
<comment type="activity regulation">
    <text evidence="1">Allosterically activated by HslU binding.</text>
</comment>
<comment type="subunit">
    <text evidence="1">A double ring-shaped homohexamer of HslV is capped on each side by a ring-shaped HslU homohexamer. The assembly of the HslU/HslV complex is dependent on binding of ATP.</text>
</comment>
<comment type="subcellular location">
    <subcellularLocation>
        <location evidence="1">Cytoplasm</location>
    </subcellularLocation>
</comment>
<comment type="similarity">
    <text evidence="1">Belongs to the peptidase T1B family. HslV subfamily.</text>
</comment>
<sequence>MSEHNPYGTMHATTIITVRKGGKVVMAGDGQVSLGQTVMKGNARKVRRLSKGDVIAGFAGATADAFTLLERLEAKLEQYPDQLMRAAVELAKDWRTNKYLRNLEAMMLVADKSVTLAITGNGDVLEPEHGTIAIGSGGNYAFAAARALMDSDKSAEEIARRALQIAGDICVYTNHNVVMETLDAD</sequence>
<accession>C3MBC6</accession>
<evidence type="ECO:0000255" key="1">
    <source>
        <dbReference type="HAMAP-Rule" id="MF_00248"/>
    </source>
</evidence>
<protein>
    <recommendedName>
        <fullName evidence="1">ATP-dependent protease subunit HslV</fullName>
        <ecNumber evidence="1">3.4.25.2</ecNumber>
    </recommendedName>
</protein>
<proteinExistence type="inferred from homology"/>
<keyword id="KW-0021">Allosteric enzyme</keyword>
<keyword id="KW-0963">Cytoplasm</keyword>
<keyword id="KW-0378">Hydrolase</keyword>
<keyword id="KW-0479">Metal-binding</keyword>
<keyword id="KW-0645">Protease</keyword>
<keyword id="KW-1185">Reference proteome</keyword>
<keyword id="KW-0915">Sodium</keyword>
<keyword id="KW-0888">Threonine protease</keyword>
<reference key="1">
    <citation type="journal article" date="2009" name="Appl. Environ. Microbiol.">
        <title>Rhizobium sp. strain NGR234 possesses a remarkable number of secretion systems.</title>
        <authorList>
            <person name="Schmeisser C."/>
            <person name="Liesegang H."/>
            <person name="Krysciak D."/>
            <person name="Bakkou N."/>
            <person name="Le Quere A."/>
            <person name="Wollherr A."/>
            <person name="Heinemeyer I."/>
            <person name="Morgenstern B."/>
            <person name="Pommerening-Roeser A."/>
            <person name="Flores M."/>
            <person name="Palacios R."/>
            <person name="Brenner S."/>
            <person name="Gottschalk G."/>
            <person name="Schmitz R.A."/>
            <person name="Broughton W.J."/>
            <person name="Perret X."/>
            <person name="Strittmatter A.W."/>
            <person name="Streit W.R."/>
        </authorList>
    </citation>
    <scope>NUCLEOTIDE SEQUENCE [LARGE SCALE GENOMIC DNA]</scope>
    <source>
        <strain>NBRC 101917 / NGR234</strain>
    </source>
</reference>
<dbReference type="EC" id="3.4.25.2" evidence="1"/>
<dbReference type="EMBL" id="CP001389">
    <property type="protein sequence ID" value="ACP27135.1"/>
    <property type="molecule type" value="Genomic_DNA"/>
</dbReference>
<dbReference type="RefSeq" id="WP_012709882.1">
    <property type="nucleotide sequence ID" value="NC_012587.1"/>
</dbReference>
<dbReference type="RefSeq" id="YP_002827888.1">
    <property type="nucleotide sequence ID" value="NC_012587.1"/>
</dbReference>
<dbReference type="SMR" id="C3MBC6"/>
<dbReference type="STRING" id="394.NGR_c34050"/>
<dbReference type="MEROPS" id="T01.006"/>
<dbReference type="KEGG" id="rhi:NGR_c34050"/>
<dbReference type="PATRIC" id="fig|394.7.peg.6255"/>
<dbReference type="eggNOG" id="COG5405">
    <property type="taxonomic scope" value="Bacteria"/>
</dbReference>
<dbReference type="HOGENOM" id="CLU_093872_1_0_5"/>
<dbReference type="OrthoDB" id="9804884at2"/>
<dbReference type="Proteomes" id="UP000001054">
    <property type="component" value="Chromosome"/>
</dbReference>
<dbReference type="GO" id="GO:0009376">
    <property type="term" value="C:HslUV protease complex"/>
    <property type="evidence" value="ECO:0007669"/>
    <property type="project" value="UniProtKB-UniRule"/>
</dbReference>
<dbReference type="GO" id="GO:0005839">
    <property type="term" value="C:proteasome core complex"/>
    <property type="evidence" value="ECO:0007669"/>
    <property type="project" value="InterPro"/>
</dbReference>
<dbReference type="GO" id="GO:0046872">
    <property type="term" value="F:metal ion binding"/>
    <property type="evidence" value="ECO:0007669"/>
    <property type="project" value="UniProtKB-KW"/>
</dbReference>
<dbReference type="GO" id="GO:0004298">
    <property type="term" value="F:threonine-type endopeptidase activity"/>
    <property type="evidence" value="ECO:0007669"/>
    <property type="project" value="UniProtKB-KW"/>
</dbReference>
<dbReference type="GO" id="GO:0051603">
    <property type="term" value="P:proteolysis involved in protein catabolic process"/>
    <property type="evidence" value="ECO:0007669"/>
    <property type="project" value="InterPro"/>
</dbReference>
<dbReference type="CDD" id="cd01913">
    <property type="entry name" value="protease_HslV"/>
    <property type="match status" value="1"/>
</dbReference>
<dbReference type="FunFam" id="3.60.20.10:FF:000002">
    <property type="entry name" value="ATP-dependent protease subunit HslV"/>
    <property type="match status" value="1"/>
</dbReference>
<dbReference type="Gene3D" id="3.60.20.10">
    <property type="entry name" value="Glutamine Phosphoribosylpyrophosphate, subunit 1, domain 1"/>
    <property type="match status" value="1"/>
</dbReference>
<dbReference type="HAMAP" id="MF_00248">
    <property type="entry name" value="HslV"/>
    <property type="match status" value="1"/>
</dbReference>
<dbReference type="InterPro" id="IPR022281">
    <property type="entry name" value="ATP-dep_Prtase_HsIV_su"/>
</dbReference>
<dbReference type="InterPro" id="IPR029055">
    <property type="entry name" value="Ntn_hydrolases_N"/>
</dbReference>
<dbReference type="InterPro" id="IPR001353">
    <property type="entry name" value="Proteasome_sua/b"/>
</dbReference>
<dbReference type="InterPro" id="IPR023333">
    <property type="entry name" value="Proteasome_suB-type"/>
</dbReference>
<dbReference type="NCBIfam" id="TIGR03692">
    <property type="entry name" value="ATP_dep_HslV"/>
    <property type="match status" value="1"/>
</dbReference>
<dbReference type="NCBIfam" id="NF003964">
    <property type="entry name" value="PRK05456.1"/>
    <property type="match status" value="1"/>
</dbReference>
<dbReference type="PANTHER" id="PTHR32194:SF7">
    <property type="entry name" value="ATP-DEPENDENT PROTEASE SUBUNIT HSLV"/>
    <property type="match status" value="1"/>
</dbReference>
<dbReference type="PANTHER" id="PTHR32194">
    <property type="entry name" value="METALLOPROTEASE TLDD"/>
    <property type="match status" value="1"/>
</dbReference>
<dbReference type="Pfam" id="PF00227">
    <property type="entry name" value="Proteasome"/>
    <property type="match status" value="1"/>
</dbReference>
<dbReference type="PIRSF" id="PIRSF039093">
    <property type="entry name" value="HslV"/>
    <property type="match status" value="1"/>
</dbReference>
<dbReference type="SUPFAM" id="SSF56235">
    <property type="entry name" value="N-terminal nucleophile aminohydrolases (Ntn hydrolases)"/>
    <property type="match status" value="1"/>
</dbReference>
<dbReference type="PROSITE" id="PS51476">
    <property type="entry name" value="PROTEASOME_BETA_2"/>
    <property type="match status" value="1"/>
</dbReference>